<protein>
    <recommendedName>
        <fullName>Glycosyl-4,4'-diaponeurosporenoate acyltransferase</fullName>
        <ecNumber>2.3.1.-</ecNumber>
    </recommendedName>
</protein>
<sequence length="165" mass="20331">MKIMKKYIKTAFFCSMYWLIVQLNIANLGTRIPDKYFRQKHIIFKSFNFEKHGKFWNKWFYVRKWKHKILDGHKLNRNIYDQRHLMTINIDEIEKMIIETKRAELIHWISILPVIIFNKGPRVVKYINIFYAMIANVPIIIVQRYNRPRLTQLLRILKRRGERHD</sequence>
<keyword id="KW-0012">Acyltransferase</keyword>
<keyword id="KW-0125">Carotenoid biosynthesis</keyword>
<keyword id="KW-1003">Cell membrane</keyword>
<keyword id="KW-0472">Membrane</keyword>
<keyword id="KW-0732">Signal</keyword>
<keyword id="KW-0808">Transferase</keyword>
<keyword id="KW-0812">Transmembrane</keyword>
<keyword id="KW-1133">Transmembrane helix</keyword>
<feature type="signal peptide" evidence="2">
    <location>
        <begin position="1"/>
        <end position="28"/>
    </location>
</feature>
<feature type="chain" id="PRO_0000284849" description="Glycosyl-4,4'-diaponeurosporenoate acyltransferase">
    <location>
        <begin position="29"/>
        <end position="165"/>
    </location>
</feature>
<feature type="transmembrane region" description="Helical" evidence="2">
    <location>
        <begin position="126"/>
        <end position="145"/>
    </location>
</feature>
<organism>
    <name type="scientific">Staphylococcus aureus (strain MRSA252)</name>
    <dbReference type="NCBI Taxonomy" id="282458"/>
    <lineage>
        <taxon>Bacteria</taxon>
        <taxon>Bacillati</taxon>
        <taxon>Bacillota</taxon>
        <taxon>Bacilli</taxon>
        <taxon>Bacillales</taxon>
        <taxon>Staphylococcaceae</taxon>
        <taxon>Staphylococcus</taxon>
    </lineage>
</organism>
<gene>
    <name type="primary">crtO</name>
    <name type="ordered locus">SAR2647</name>
</gene>
<reference key="1">
    <citation type="journal article" date="2004" name="Proc. Natl. Acad. Sci. U.S.A.">
        <title>Complete genomes of two clinical Staphylococcus aureus strains: evidence for the rapid evolution of virulence and drug resistance.</title>
        <authorList>
            <person name="Holden M.T.G."/>
            <person name="Feil E.J."/>
            <person name="Lindsay J.A."/>
            <person name="Peacock S.J."/>
            <person name="Day N.P.J."/>
            <person name="Enright M.C."/>
            <person name="Foster T.J."/>
            <person name="Moore C.E."/>
            <person name="Hurst L."/>
            <person name="Atkin R."/>
            <person name="Barron A."/>
            <person name="Bason N."/>
            <person name="Bentley S.D."/>
            <person name="Chillingworth C."/>
            <person name="Chillingworth T."/>
            <person name="Churcher C."/>
            <person name="Clark L."/>
            <person name="Corton C."/>
            <person name="Cronin A."/>
            <person name="Doggett J."/>
            <person name="Dowd L."/>
            <person name="Feltwell T."/>
            <person name="Hance Z."/>
            <person name="Harris B."/>
            <person name="Hauser H."/>
            <person name="Holroyd S."/>
            <person name="Jagels K."/>
            <person name="James K.D."/>
            <person name="Lennard N."/>
            <person name="Line A."/>
            <person name="Mayes R."/>
            <person name="Moule S."/>
            <person name="Mungall K."/>
            <person name="Ormond D."/>
            <person name="Quail M.A."/>
            <person name="Rabbinowitsch E."/>
            <person name="Rutherford K.M."/>
            <person name="Sanders M."/>
            <person name="Sharp S."/>
            <person name="Simmonds M."/>
            <person name="Stevens K."/>
            <person name="Whitehead S."/>
            <person name="Barrell B.G."/>
            <person name="Spratt B.G."/>
            <person name="Parkhill J."/>
        </authorList>
    </citation>
    <scope>NUCLEOTIDE SEQUENCE [LARGE SCALE GENOMIC DNA]</scope>
    <source>
        <strain>MRSA252</strain>
    </source>
</reference>
<comment type="function">
    <text evidence="1">Catalyzes the acylation of glycosyl-4,4'-diaponeurosporenoate, i.e. the esterification of glucose at the C6'' position with the carboxyl group of the C(15) fatty acid 12-methyltetradecanoic acid, to yield staphyloxanthin. This is the last step in the biosynthesis of this orange pigment, present in most staphylococci strains (By similarity).</text>
</comment>
<comment type="pathway">
    <text>Carotenoid biosynthesis; staphyloxanthin biosynthesis; staphyloxanthin from farnesyl diphosphate: step 5/5.</text>
</comment>
<comment type="subcellular location">
    <subcellularLocation>
        <location evidence="3">Cell membrane</location>
        <topology evidence="3">Single-pass membrane protein</topology>
    </subcellularLocation>
</comment>
<comment type="similarity">
    <text evidence="3">Belongs to the acyltransferase CrtO family.</text>
</comment>
<evidence type="ECO:0000250" key="1"/>
<evidence type="ECO:0000255" key="2"/>
<evidence type="ECO:0000305" key="3"/>
<dbReference type="EC" id="2.3.1.-"/>
<dbReference type="EMBL" id="BX571856">
    <property type="protein sequence ID" value="CAG41624.1"/>
    <property type="molecule type" value="Genomic_DNA"/>
</dbReference>
<dbReference type="KEGG" id="sar:SAR2647"/>
<dbReference type="HOGENOM" id="CLU_133300_0_0_9"/>
<dbReference type="UniPathway" id="UPA00029">
    <property type="reaction ID" value="UER00560"/>
</dbReference>
<dbReference type="Proteomes" id="UP000000596">
    <property type="component" value="Chromosome"/>
</dbReference>
<dbReference type="GO" id="GO:0005886">
    <property type="term" value="C:plasma membrane"/>
    <property type="evidence" value="ECO:0007669"/>
    <property type="project" value="UniProtKB-SubCell"/>
</dbReference>
<dbReference type="GO" id="GO:0016746">
    <property type="term" value="F:acyltransferase activity"/>
    <property type="evidence" value="ECO:0007669"/>
    <property type="project" value="UniProtKB-KW"/>
</dbReference>
<dbReference type="GO" id="GO:0016117">
    <property type="term" value="P:carotenoid biosynthetic process"/>
    <property type="evidence" value="ECO:0007669"/>
    <property type="project" value="UniProtKB-KW"/>
</dbReference>
<dbReference type="InterPro" id="IPR044021">
    <property type="entry name" value="CrtO"/>
</dbReference>
<dbReference type="Pfam" id="PF18927">
    <property type="entry name" value="CrtO"/>
    <property type="match status" value="1"/>
</dbReference>
<proteinExistence type="inferred from homology"/>
<accession>Q6GDN4</accession>
<name>CRTO_STAAR</name>